<accession>O27226</accession>
<feature type="chain" id="PRO_0000147551" description="Tetrahydromethanopterin S-methyltransferase subunit F">
    <location>
        <begin position="1"/>
        <end position="68"/>
    </location>
</feature>
<feature type="transmembrane region" description="Helical" evidence="2">
    <location>
        <begin position="45"/>
        <end position="65"/>
    </location>
</feature>
<organism>
    <name type="scientific">Methanothermobacter thermautotrophicus (strain ATCC 29096 / DSM 1053 / JCM 10044 / NBRC 100330 / Delta H)</name>
    <name type="common">Methanobacterium thermoautotrophicum</name>
    <dbReference type="NCBI Taxonomy" id="187420"/>
    <lineage>
        <taxon>Archaea</taxon>
        <taxon>Methanobacteriati</taxon>
        <taxon>Methanobacteriota</taxon>
        <taxon>Methanomada group</taxon>
        <taxon>Methanobacteria</taxon>
        <taxon>Methanobacteriales</taxon>
        <taxon>Methanobacteriaceae</taxon>
        <taxon>Methanothermobacter</taxon>
    </lineage>
</organism>
<sequence>MIILSNKPNIRGIKRVVEDIKYRNQLIGRDGRLFAGLIATRISGIAIGFLLAVLLVGVPAMMSILGVI</sequence>
<reference key="1">
    <citation type="journal article" date="1997" name="J. Bacteriol.">
        <title>Complete genome sequence of Methanobacterium thermoautotrophicum deltaH: functional analysis and comparative genomics.</title>
        <authorList>
            <person name="Smith D.R."/>
            <person name="Doucette-Stamm L.A."/>
            <person name="Deloughery C."/>
            <person name="Lee H.-M."/>
            <person name="Dubois J."/>
            <person name="Aldredge T."/>
            <person name="Bashirzadeh R."/>
            <person name="Blakely D."/>
            <person name="Cook R."/>
            <person name="Gilbert K."/>
            <person name="Harrison D."/>
            <person name="Hoang L."/>
            <person name="Keagle P."/>
            <person name="Lumm W."/>
            <person name="Pothier B."/>
            <person name="Qiu D."/>
            <person name="Spadafora R."/>
            <person name="Vicare R."/>
            <person name="Wang Y."/>
            <person name="Wierzbowski J."/>
            <person name="Gibson R."/>
            <person name="Jiwani N."/>
            <person name="Caruso A."/>
            <person name="Bush D."/>
            <person name="Safer H."/>
            <person name="Patwell D."/>
            <person name="Prabhakar S."/>
            <person name="McDougall S."/>
            <person name="Shimer G."/>
            <person name="Goyal A."/>
            <person name="Pietrovski S."/>
            <person name="Church G.M."/>
            <person name="Daniels C.J."/>
            <person name="Mao J.-I."/>
            <person name="Rice P."/>
            <person name="Noelling J."/>
            <person name="Reeve J.N."/>
        </authorList>
    </citation>
    <scope>NUCLEOTIDE SEQUENCE [LARGE SCALE GENOMIC DNA]</scope>
    <source>
        <strain>ATCC 29096 / DSM 1053 / JCM 10044 / NBRC 100330 / Delta H</strain>
    </source>
</reference>
<proteinExistence type="inferred from homology"/>
<evidence type="ECO:0000250" key="1"/>
<evidence type="ECO:0000255" key="2"/>
<evidence type="ECO:0000305" key="3"/>
<protein>
    <recommendedName>
        <fullName>Tetrahydromethanopterin S-methyltransferase subunit F</fullName>
        <ecNumber>7.2.1.4</ecNumber>
    </recommendedName>
    <alternativeName>
        <fullName>N5-methyltetrahydromethanopterin--coenzyme M methyltransferase subunit F</fullName>
    </alternativeName>
</protein>
<name>MTRF_METTH</name>
<dbReference type="EC" id="7.2.1.4"/>
<dbReference type="EMBL" id="AE000666">
    <property type="protein sequence ID" value="AAB85647.1"/>
    <property type="molecule type" value="Genomic_DNA"/>
</dbReference>
<dbReference type="PIR" id="C69021">
    <property type="entry name" value="C69021"/>
</dbReference>
<dbReference type="RefSeq" id="WP_010876782.1">
    <property type="nucleotide sequence ID" value="NC_000916.1"/>
</dbReference>
<dbReference type="SMR" id="O27226"/>
<dbReference type="FunCoup" id="O27226">
    <property type="interactions" value="66"/>
</dbReference>
<dbReference type="IntAct" id="O27226">
    <property type="interactions" value="1"/>
</dbReference>
<dbReference type="STRING" id="187420.MTH_1158"/>
<dbReference type="PaxDb" id="187420-MTH_1158"/>
<dbReference type="EnsemblBacteria" id="AAB85647">
    <property type="protein sequence ID" value="AAB85647"/>
    <property type="gene ID" value="MTH_1158"/>
</dbReference>
<dbReference type="GeneID" id="82297599"/>
<dbReference type="KEGG" id="mth:MTH_1158"/>
<dbReference type="HOGENOM" id="CLU_204306_0_0_2"/>
<dbReference type="InParanoid" id="O27226"/>
<dbReference type="UniPathway" id="UPA00640">
    <property type="reaction ID" value="UER00698"/>
</dbReference>
<dbReference type="Proteomes" id="UP000005223">
    <property type="component" value="Chromosome"/>
</dbReference>
<dbReference type="GO" id="GO:0005886">
    <property type="term" value="C:plasma membrane"/>
    <property type="evidence" value="ECO:0007669"/>
    <property type="project" value="UniProtKB-SubCell"/>
</dbReference>
<dbReference type="GO" id="GO:0030269">
    <property type="term" value="F:tetrahydromethanopterin S-methyltransferase activity"/>
    <property type="evidence" value="ECO:0007669"/>
    <property type="project" value="UniProtKB-UniRule"/>
</dbReference>
<dbReference type="GO" id="GO:0019386">
    <property type="term" value="P:methanogenesis, from carbon dioxide"/>
    <property type="evidence" value="ECO:0007669"/>
    <property type="project" value="UniProtKB-UniRule"/>
</dbReference>
<dbReference type="GO" id="GO:0032259">
    <property type="term" value="P:methylation"/>
    <property type="evidence" value="ECO:0007669"/>
    <property type="project" value="UniProtKB-KW"/>
</dbReference>
<dbReference type="GO" id="GO:0006730">
    <property type="term" value="P:one-carbon metabolic process"/>
    <property type="evidence" value="ECO:0007669"/>
    <property type="project" value="UniProtKB-UniRule"/>
</dbReference>
<dbReference type="HAMAP" id="MF_01099">
    <property type="entry name" value="MtrF"/>
    <property type="match status" value="1"/>
</dbReference>
<dbReference type="InterPro" id="IPR011307">
    <property type="entry name" value="MeTrfase_F"/>
</dbReference>
<dbReference type="InterPro" id="IPR013347">
    <property type="entry name" value="MeTrfase_F_su"/>
</dbReference>
<dbReference type="NCBIfam" id="TIGR02507">
    <property type="entry name" value="MtrF"/>
    <property type="match status" value="1"/>
</dbReference>
<dbReference type="NCBIfam" id="NF009776">
    <property type="entry name" value="PRK13275.1"/>
    <property type="match status" value="1"/>
</dbReference>
<dbReference type="Pfam" id="PF09472">
    <property type="entry name" value="MtrF"/>
    <property type="match status" value="1"/>
</dbReference>
<dbReference type="PIRSF" id="PIRSF006523">
    <property type="entry name" value="MtrF"/>
    <property type="match status" value="1"/>
</dbReference>
<comment type="function">
    <text evidence="1">Part of a complex that catalyzes the formation of methyl-coenzyme M and tetrahydromethanopterin from coenzyme M and methyl-tetrahydromethanopterin. This is an energy-conserving, sodium-ion translocating step.</text>
</comment>
<comment type="catalytic activity">
    <reaction>
        <text>5-methyl-5,6,7,8-tetrahydromethanopterin + coenzyme M + 2 Na(+)(in) = 5,6,7,8-tetrahydromethanopterin + methyl-coenzyme M + 2 Na(+)(out)</text>
        <dbReference type="Rhea" id="RHEA:53492"/>
        <dbReference type="ChEBI" id="CHEBI:29101"/>
        <dbReference type="ChEBI" id="CHEBI:58103"/>
        <dbReference type="ChEBI" id="CHEBI:58116"/>
        <dbReference type="ChEBI" id="CHEBI:58286"/>
        <dbReference type="ChEBI" id="CHEBI:58319"/>
        <dbReference type="EC" id="7.2.1.4"/>
    </reaction>
</comment>
<comment type="pathway">
    <text>One-carbon metabolism; methanogenesis from CO(2); methyl-coenzyme M from 5,10-methylene-5,6,7,8-tetrahydromethanopterin: step 2/2.</text>
</comment>
<comment type="subunit">
    <text evidence="1">The complex is composed of 8 subunits; MtrA, MtrB, MtrC, MtrD, MtrE, MtrF, MtrG and MtrH.</text>
</comment>
<comment type="subcellular location">
    <subcellularLocation>
        <location evidence="3">Cell membrane</location>
        <topology evidence="3">Single-pass membrane protein</topology>
    </subcellularLocation>
</comment>
<comment type="similarity">
    <text evidence="3">Belongs to the MtrF family.</text>
</comment>
<keyword id="KW-1003">Cell membrane</keyword>
<keyword id="KW-0472">Membrane</keyword>
<keyword id="KW-0484">Methanogenesis</keyword>
<keyword id="KW-0489">Methyltransferase</keyword>
<keyword id="KW-0554">One-carbon metabolism</keyword>
<keyword id="KW-1185">Reference proteome</keyword>
<keyword id="KW-0808">Transferase</keyword>
<keyword id="KW-1278">Translocase</keyword>
<keyword id="KW-0812">Transmembrane</keyword>
<keyword id="KW-1133">Transmembrane helix</keyword>
<gene>
    <name type="primary">mtrF</name>
    <name type="ordered locus">MTH_1158</name>
</gene>